<protein>
    <recommendedName>
        <fullName evidence="1">tRNA modification GTPase MnmE</fullName>
        <ecNumber evidence="1">3.6.-.-</ecNumber>
    </recommendedName>
</protein>
<sequence>MSDNDTIVAQATPPGRGGVGILRISGLKAREVAETVLGKLPKPRYADYLPFKDADGSVLDQGIALWFPGPNSFTGEDVLELQGHGGPVILDLLLKRILTIPDLRIARPGEFSERAFLNDKLDLAQAEAIADLIDASSEQAARSALNSLQGAFSARVNHLVEALTHLRIYVEAAIDFPDEEIDFLSDGKIEAQLNDVIADLDAVRAEARQGSLLREGMKVVIAGRPNAGKSSLLNALAGREAAIVTDIAGTTRDVLREHIHIDGMPLHIIDTAGLREASDEVERIGIERAWQEIEQADRVLFMVDGTTTDAVDPAEIWPEFIARLPAKLPITVVRNKADITGETLGMSEVNGHALIRLSARTGEGVDVLRNHLKQSMGFDTNMEGGFLARRRHLQALEQAAEHLQQGKAQLLGAWAGELLAEELRLAQQNLSEITGEFTSDDLLGRIFSSFCIGK</sequence>
<comment type="function">
    <text evidence="1">Exhibits a very high intrinsic GTPase hydrolysis rate. Involved in the addition of a carboxymethylaminomethyl (cmnm) group at the wobble position (U34) of certain tRNAs, forming tRNA-cmnm(5)s(2)U34.</text>
</comment>
<comment type="cofactor">
    <cofactor evidence="1">
        <name>K(+)</name>
        <dbReference type="ChEBI" id="CHEBI:29103"/>
    </cofactor>
    <text evidence="1">Binds 1 potassium ion per subunit.</text>
</comment>
<comment type="subunit">
    <text evidence="1">Homodimer. Heterotetramer of two MnmE and two MnmG subunits.</text>
</comment>
<comment type="subcellular location">
    <subcellularLocation>
        <location evidence="1">Cytoplasm</location>
    </subcellularLocation>
</comment>
<comment type="similarity">
    <text evidence="1">Belongs to the TRAFAC class TrmE-Era-EngA-EngB-Septin-like GTPase superfamily. TrmE GTPase family.</text>
</comment>
<reference key="1">
    <citation type="journal article" date="2009" name="PLoS Genet.">
        <title>Organised genome dynamics in the Escherichia coli species results in highly diverse adaptive paths.</title>
        <authorList>
            <person name="Touchon M."/>
            <person name="Hoede C."/>
            <person name="Tenaillon O."/>
            <person name="Barbe V."/>
            <person name="Baeriswyl S."/>
            <person name="Bidet P."/>
            <person name="Bingen E."/>
            <person name="Bonacorsi S."/>
            <person name="Bouchier C."/>
            <person name="Bouvet O."/>
            <person name="Calteau A."/>
            <person name="Chiapello H."/>
            <person name="Clermont O."/>
            <person name="Cruveiller S."/>
            <person name="Danchin A."/>
            <person name="Diard M."/>
            <person name="Dossat C."/>
            <person name="Karoui M.E."/>
            <person name="Frapy E."/>
            <person name="Garry L."/>
            <person name="Ghigo J.M."/>
            <person name="Gilles A.M."/>
            <person name="Johnson J."/>
            <person name="Le Bouguenec C."/>
            <person name="Lescat M."/>
            <person name="Mangenot S."/>
            <person name="Martinez-Jehanne V."/>
            <person name="Matic I."/>
            <person name="Nassif X."/>
            <person name="Oztas S."/>
            <person name="Petit M.A."/>
            <person name="Pichon C."/>
            <person name="Rouy Z."/>
            <person name="Ruf C.S."/>
            <person name="Schneider D."/>
            <person name="Tourret J."/>
            <person name="Vacherie B."/>
            <person name="Vallenet D."/>
            <person name="Medigue C."/>
            <person name="Rocha E.P.C."/>
            <person name="Denamur E."/>
        </authorList>
    </citation>
    <scope>NUCLEOTIDE SEQUENCE [LARGE SCALE GENOMIC DNA]</scope>
    <source>
        <strain>UMN026 / ExPEC</strain>
    </source>
</reference>
<accession>B7NF24</accession>
<name>MNME_ECOLU</name>
<organism>
    <name type="scientific">Escherichia coli O17:K52:H18 (strain UMN026 / ExPEC)</name>
    <dbReference type="NCBI Taxonomy" id="585056"/>
    <lineage>
        <taxon>Bacteria</taxon>
        <taxon>Pseudomonadati</taxon>
        <taxon>Pseudomonadota</taxon>
        <taxon>Gammaproteobacteria</taxon>
        <taxon>Enterobacterales</taxon>
        <taxon>Enterobacteriaceae</taxon>
        <taxon>Escherichia</taxon>
    </lineage>
</organism>
<keyword id="KW-0963">Cytoplasm</keyword>
<keyword id="KW-0342">GTP-binding</keyword>
<keyword id="KW-0378">Hydrolase</keyword>
<keyword id="KW-0460">Magnesium</keyword>
<keyword id="KW-0479">Metal-binding</keyword>
<keyword id="KW-0547">Nucleotide-binding</keyword>
<keyword id="KW-0630">Potassium</keyword>
<keyword id="KW-0819">tRNA processing</keyword>
<gene>
    <name evidence="1" type="primary">mnmE</name>
    <name evidence="1" type="synonym">trmE</name>
    <name type="ordered locus">ECUMN_4238</name>
</gene>
<feature type="chain" id="PRO_1000197048" description="tRNA modification GTPase MnmE">
    <location>
        <begin position="1"/>
        <end position="454"/>
    </location>
</feature>
<feature type="domain" description="TrmE-type G">
    <location>
        <begin position="216"/>
        <end position="377"/>
    </location>
</feature>
<feature type="binding site" evidence="1">
    <location>
        <position position="23"/>
    </location>
    <ligand>
        <name>(6S)-5-formyl-5,6,7,8-tetrahydrofolate</name>
        <dbReference type="ChEBI" id="CHEBI:57457"/>
    </ligand>
</feature>
<feature type="binding site" evidence="1">
    <location>
        <position position="80"/>
    </location>
    <ligand>
        <name>(6S)-5-formyl-5,6,7,8-tetrahydrofolate</name>
        <dbReference type="ChEBI" id="CHEBI:57457"/>
    </ligand>
</feature>
<feature type="binding site" evidence="1">
    <location>
        <position position="120"/>
    </location>
    <ligand>
        <name>(6S)-5-formyl-5,6,7,8-tetrahydrofolate</name>
        <dbReference type="ChEBI" id="CHEBI:57457"/>
    </ligand>
</feature>
<feature type="binding site" evidence="1">
    <location>
        <begin position="226"/>
        <end position="231"/>
    </location>
    <ligand>
        <name>GTP</name>
        <dbReference type="ChEBI" id="CHEBI:37565"/>
    </ligand>
</feature>
<feature type="binding site" evidence="1">
    <location>
        <position position="226"/>
    </location>
    <ligand>
        <name>K(+)</name>
        <dbReference type="ChEBI" id="CHEBI:29103"/>
    </ligand>
</feature>
<feature type="binding site" evidence="1">
    <location>
        <position position="230"/>
    </location>
    <ligand>
        <name>Mg(2+)</name>
        <dbReference type="ChEBI" id="CHEBI:18420"/>
    </ligand>
</feature>
<feature type="binding site" evidence="1">
    <location>
        <begin position="245"/>
        <end position="251"/>
    </location>
    <ligand>
        <name>GTP</name>
        <dbReference type="ChEBI" id="CHEBI:37565"/>
    </ligand>
</feature>
<feature type="binding site" evidence="1">
    <location>
        <position position="245"/>
    </location>
    <ligand>
        <name>K(+)</name>
        <dbReference type="ChEBI" id="CHEBI:29103"/>
    </ligand>
</feature>
<feature type="binding site" evidence="1">
    <location>
        <position position="247"/>
    </location>
    <ligand>
        <name>K(+)</name>
        <dbReference type="ChEBI" id="CHEBI:29103"/>
    </ligand>
</feature>
<feature type="binding site" evidence="1">
    <location>
        <position position="250"/>
    </location>
    <ligand>
        <name>K(+)</name>
        <dbReference type="ChEBI" id="CHEBI:29103"/>
    </ligand>
</feature>
<feature type="binding site" evidence="1">
    <location>
        <position position="251"/>
    </location>
    <ligand>
        <name>Mg(2+)</name>
        <dbReference type="ChEBI" id="CHEBI:18420"/>
    </ligand>
</feature>
<feature type="binding site" evidence="1">
    <location>
        <begin position="270"/>
        <end position="273"/>
    </location>
    <ligand>
        <name>GTP</name>
        <dbReference type="ChEBI" id="CHEBI:37565"/>
    </ligand>
</feature>
<feature type="binding site" evidence="1">
    <location>
        <begin position="335"/>
        <end position="338"/>
    </location>
    <ligand>
        <name>GTP</name>
        <dbReference type="ChEBI" id="CHEBI:37565"/>
    </ligand>
</feature>
<feature type="binding site" evidence="1">
    <location>
        <begin position="358"/>
        <end position="360"/>
    </location>
    <ligand>
        <name>GTP</name>
        <dbReference type="ChEBI" id="CHEBI:37565"/>
    </ligand>
</feature>
<feature type="binding site" evidence="1">
    <location>
        <position position="454"/>
    </location>
    <ligand>
        <name>(6S)-5-formyl-5,6,7,8-tetrahydrofolate</name>
        <dbReference type="ChEBI" id="CHEBI:57457"/>
    </ligand>
</feature>
<proteinExistence type="inferred from homology"/>
<dbReference type="EC" id="3.6.-.-" evidence="1"/>
<dbReference type="EMBL" id="CU928163">
    <property type="protein sequence ID" value="CAR15378.1"/>
    <property type="molecule type" value="Genomic_DNA"/>
</dbReference>
<dbReference type="RefSeq" id="WP_001282357.1">
    <property type="nucleotide sequence ID" value="NC_011751.1"/>
</dbReference>
<dbReference type="RefSeq" id="YP_002414872.1">
    <property type="nucleotide sequence ID" value="NC_011751.1"/>
</dbReference>
<dbReference type="SMR" id="B7NF24"/>
<dbReference type="STRING" id="585056.ECUMN_4238"/>
<dbReference type="KEGG" id="eum:ECUMN_4238"/>
<dbReference type="PATRIC" id="fig|585056.7.peg.4409"/>
<dbReference type="HOGENOM" id="CLU_019624_4_1_6"/>
<dbReference type="Proteomes" id="UP000007097">
    <property type="component" value="Chromosome"/>
</dbReference>
<dbReference type="GO" id="GO:0005829">
    <property type="term" value="C:cytosol"/>
    <property type="evidence" value="ECO:0007669"/>
    <property type="project" value="TreeGrafter"/>
</dbReference>
<dbReference type="GO" id="GO:0005525">
    <property type="term" value="F:GTP binding"/>
    <property type="evidence" value="ECO:0007669"/>
    <property type="project" value="UniProtKB-UniRule"/>
</dbReference>
<dbReference type="GO" id="GO:0003924">
    <property type="term" value="F:GTPase activity"/>
    <property type="evidence" value="ECO:0007669"/>
    <property type="project" value="UniProtKB-UniRule"/>
</dbReference>
<dbReference type="GO" id="GO:0046872">
    <property type="term" value="F:metal ion binding"/>
    <property type="evidence" value="ECO:0007669"/>
    <property type="project" value="UniProtKB-KW"/>
</dbReference>
<dbReference type="GO" id="GO:0030488">
    <property type="term" value="P:tRNA methylation"/>
    <property type="evidence" value="ECO:0007669"/>
    <property type="project" value="TreeGrafter"/>
</dbReference>
<dbReference type="GO" id="GO:0002098">
    <property type="term" value="P:tRNA wobble uridine modification"/>
    <property type="evidence" value="ECO:0007669"/>
    <property type="project" value="TreeGrafter"/>
</dbReference>
<dbReference type="CDD" id="cd04164">
    <property type="entry name" value="trmE"/>
    <property type="match status" value="1"/>
</dbReference>
<dbReference type="CDD" id="cd14858">
    <property type="entry name" value="TrmE_N"/>
    <property type="match status" value="1"/>
</dbReference>
<dbReference type="FunFam" id="3.30.1360.120:FF:000001">
    <property type="entry name" value="tRNA modification GTPase MnmE"/>
    <property type="match status" value="1"/>
</dbReference>
<dbReference type="FunFam" id="3.40.50.300:FF:000249">
    <property type="entry name" value="tRNA modification GTPase MnmE"/>
    <property type="match status" value="1"/>
</dbReference>
<dbReference type="Gene3D" id="3.40.50.300">
    <property type="entry name" value="P-loop containing nucleotide triphosphate hydrolases"/>
    <property type="match status" value="1"/>
</dbReference>
<dbReference type="Gene3D" id="3.30.1360.120">
    <property type="entry name" value="Probable tRNA modification gtpase trme, domain 1"/>
    <property type="match status" value="1"/>
</dbReference>
<dbReference type="Gene3D" id="1.20.120.430">
    <property type="entry name" value="tRNA modification GTPase MnmE domain 2"/>
    <property type="match status" value="1"/>
</dbReference>
<dbReference type="HAMAP" id="MF_00379">
    <property type="entry name" value="GTPase_MnmE"/>
    <property type="match status" value="1"/>
</dbReference>
<dbReference type="InterPro" id="IPR031168">
    <property type="entry name" value="G_TrmE"/>
</dbReference>
<dbReference type="InterPro" id="IPR006073">
    <property type="entry name" value="GTP-bd"/>
</dbReference>
<dbReference type="InterPro" id="IPR018948">
    <property type="entry name" value="GTP-bd_TrmE_N"/>
</dbReference>
<dbReference type="InterPro" id="IPR004520">
    <property type="entry name" value="GTPase_MnmE"/>
</dbReference>
<dbReference type="InterPro" id="IPR027368">
    <property type="entry name" value="MnmE_dom2"/>
</dbReference>
<dbReference type="InterPro" id="IPR025867">
    <property type="entry name" value="MnmE_helical"/>
</dbReference>
<dbReference type="InterPro" id="IPR027417">
    <property type="entry name" value="P-loop_NTPase"/>
</dbReference>
<dbReference type="InterPro" id="IPR005225">
    <property type="entry name" value="Small_GTP-bd"/>
</dbReference>
<dbReference type="InterPro" id="IPR027266">
    <property type="entry name" value="TrmE/GcvT_dom1"/>
</dbReference>
<dbReference type="NCBIfam" id="TIGR00450">
    <property type="entry name" value="mnmE_trmE_thdF"/>
    <property type="match status" value="1"/>
</dbReference>
<dbReference type="NCBIfam" id="NF003661">
    <property type="entry name" value="PRK05291.1-3"/>
    <property type="match status" value="1"/>
</dbReference>
<dbReference type="NCBIfam" id="TIGR00231">
    <property type="entry name" value="small_GTP"/>
    <property type="match status" value="1"/>
</dbReference>
<dbReference type="PANTHER" id="PTHR42714">
    <property type="entry name" value="TRNA MODIFICATION GTPASE GTPBP3"/>
    <property type="match status" value="1"/>
</dbReference>
<dbReference type="PANTHER" id="PTHR42714:SF2">
    <property type="entry name" value="TRNA MODIFICATION GTPASE GTPBP3, MITOCHONDRIAL"/>
    <property type="match status" value="1"/>
</dbReference>
<dbReference type="Pfam" id="PF01926">
    <property type="entry name" value="MMR_HSR1"/>
    <property type="match status" value="1"/>
</dbReference>
<dbReference type="Pfam" id="PF12631">
    <property type="entry name" value="MnmE_helical"/>
    <property type="match status" value="1"/>
</dbReference>
<dbReference type="Pfam" id="PF10396">
    <property type="entry name" value="TrmE_N"/>
    <property type="match status" value="1"/>
</dbReference>
<dbReference type="SUPFAM" id="SSF52540">
    <property type="entry name" value="P-loop containing nucleoside triphosphate hydrolases"/>
    <property type="match status" value="1"/>
</dbReference>
<dbReference type="SUPFAM" id="SSF116878">
    <property type="entry name" value="TrmE connector domain"/>
    <property type="match status" value="1"/>
</dbReference>
<dbReference type="PROSITE" id="PS51709">
    <property type="entry name" value="G_TRME"/>
    <property type="match status" value="1"/>
</dbReference>
<evidence type="ECO:0000255" key="1">
    <source>
        <dbReference type="HAMAP-Rule" id="MF_00379"/>
    </source>
</evidence>